<sequence>MYIYWILLGLAIATEITGTLSMKWASVSEGNGGFILMLVMISLSYIFLSFAVKKIALGVAYALWEGIGILFITLFSVLLFDESLSLMKIAGLTTLVAGIVLIKSGTRKARKPELEVNHGAV</sequence>
<organism>
    <name type="scientific">Escherichia coli O157:H7 (strain EC4115 / EHEC)</name>
    <dbReference type="NCBI Taxonomy" id="444450"/>
    <lineage>
        <taxon>Bacteria</taxon>
        <taxon>Pseudomonadati</taxon>
        <taxon>Pseudomonadota</taxon>
        <taxon>Gammaproteobacteria</taxon>
        <taxon>Enterobacterales</taxon>
        <taxon>Enterobacteriaceae</taxon>
        <taxon>Escherichia</taxon>
    </lineage>
</organism>
<evidence type="ECO:0000255" key="1">
    <source>
        <dbReference type="HAMAP-Rule" id="MF_01598"/>
    </source>
</evidence>
<proteinExistence type="inferred from homology"/>
<feature type="chain" id="PRO_1000197332" description="Spermidine export protein MdtJ">
    <location>
        <begin position="1"/>
        <end position="121"/>
    </location>
</feature>
<feature type="transmembrane region" description="Helical" evidence="1">
    <location>
        <begin position="1"/>
        <end position="21"/>
    </location>
</feature>
<feature type="transmembrane region" description="Helical" evidence="1">
    <location>
        <begin position="32"/>
        <end position="52"/>
    </location>
</feature>
<feature type="transmembrane region" description="Helical" evidence="1">
    <location>
        <begin position="55"/>
        <end position="75"/>
    </location>
</feature>
<feature type="transmembrane region" description="Helical" evidence="1">
    <location>
        <begin position="82"/>
        <end position="102"/>
    </location>
</feature>
<reference key="1">
    <citation type="journal article" date="2011" name="Proc. Natl. Acad. Sci. U.S.A.">
        <title>Genomic anatomy of Escherichia coli O157:H7 outbreaks.</title>
        <authorList>
            <person name="Eppinger M."/>
            <person name="Mammel M.K."/>
            <person name="Leclerc J.E."/>
            <person name="Ravel J."/>
            <person name="Cebula T.A."/>
        </authorList>
    </citation>
    <scope>NUCLEOTIDE SEQUENCE [LARGE SCALE GENOMIC DNA]</scope>
    <source>
        <strain>EC4115 / EHEC</strain>
    </source>
</reference>
<gene>
    <name evidence="1" type="primary">mdtJ</name>
    <name type="ordered locus">ECH74115_2310</name>
</gene>
<comment type="function">
    <text evidence="1">Catalyzes the excretion of spermidine.</text>
</comment>
<comment type="subunit">
    <text evidence="1">Forms a complex with MdtI.</text>
</comment>
<comment type="subcellular location">
    <subcellularLocation>
        <location evidence="1">Cell inner membrane</location>
        <topology evidence="1">Multi-pass membrane protein</topology>
    </subcellularLocation>
</comment>
<comment type="similarity">
    <text evidence="1">Belongs to the drug/metabolite transporter (DMT) superfamily. Small multidrug resistance (SMR) (TC 2.A.7.1) family. MdtJ subfamily.</text>
</comment>
<name>MDTJ_ECO5E</name>
<protein>
    <recommendedName>
        <fullName evidence="1">Spermidine export protein MdtJ</fullName>
    </recommendedName>
</protein>
<accession>B5Z436</accession>
<dbReference type="EMBL" id="CP001164">
    <property type="protein sequence ID" value="ACI37725.1"/>
    <property type="molecule type" value="Genomic_DNA"/>
</dbReference>
<dbReference type="RefSeq" id="WP_000276149.1">
    <property type="nucleotide sequence ID" value="NC_011353.1"/>
</dbReference>
<dbReference type="SMR" id="B5Z436"/>
<dbReference type="GeneID" id="93775748"/>
<dbReference type="KEGG" id="ecf:ECH74115_2310"/>
<dbReference type="HOGENOM" id="CLU_133067_0_0_6"/>
<dbReference type="GO" id="GO:0005886">
    <property type="term" value="C:plasma membrane"/>
    <property type="evidence" value="ECO:0007669"/>
    <property type="project" value="UniProtKB-SubCell"/>
</dbReference>
<dbReference type="GO" id="GO:0015199">
    <property type="term" value="F:amino-acid betaine transmembrane transporter activity"/>
    <property type="evidence" value="ECO:0007669"/>
    <property type="project" value="TreeGrafter"/>
</dbReference>
<dbReference type="GO" id="GO:0015297">
    <property type="term" value="F:antiporter activity"/>
    <property type="evidence" value="ECO:0007669"/>
    <property type="project" value="TreeGrafter"/>
</dbReference>
<dbReference type="GO" id="GO:0015220">
    <property type="term" value="F:choline transmembrane transporter activity"/>
    <property type="evidence" value="ECO:0007669"/>
    <property type="project" value="TreeGrafter"/>
</dbReference>
<dbReference type="GO" id="GO:0015606">
    <property type="term" value="F:spermidine transmembrane transporter activity"/>
    <property type="evidence" value="ECO:0007669"/>
    <property type="project" value="UniProtKB-UniRule"/>
</dbReference>
<dbReference type="GO" id="GO:0031460">
    <property type="term" value="P:glycine betaine transport"/>
    <property type="evidence" value="ECO:0007669"/>
    <property type="project" value="TreeGrafter"/>
</dbReference>
<dbReference type="FunFam" id="1.10.3730.20:FF:000001">
    <property type="entry name" value="Quaternary ammonium compound resistance transporter SugE"/>
    <property type="match status" value="1"/>
</dbReference>
<dbReference type="Gene3D" id="1.10.3730.20">
    <property type="match status" value="1"/>
</dbReference>
<dbReference type="HAMAP" id="MF_01598">
    <property type="entry name" value="MdtJ"/>
    <property type="match status" value="1"/>
</dbReference>
<dbReference type="InterPro" id="IPR000390">
    <property type="entry name" value="Small_drug/metabolite_transptr"/>
</dbReference>
<dbReference type="InterPro" id="IPR045324">
    <property type="entry name" value="Small_multidrug_res"/>
</dbReference>
<dbReference type="InterPro" id="IPR023740">
    <property type="entry name" value="Spermidine_export_MdtJ"/>
</dbReference>
<dbReference type="NCBIfam" id="NF007767">
    <property type="entry name" value="PRK10452.1"/>
    <property type="match status" value="1"/>
</dbReference>
<dbReference type="PANTHER" id="PTHR30561">
    <property type="entry name" value="SMR FAMILY PROTON-DEPENDENT DRUG EFFLUX TRANSPORTER SUGE"/>
    <property type="match status" value="1"/>
</dbReference>
<dbReference type="PANTHER" id="PTHR30561:SF2">
    <property type="entry name" value="SPERMIDINE EXPORT PROTEIN MDTJ"/>
    <property type="match status" value="1"/>
</dbReference>
<dbReference type="Pfam" id="PF00893">
    <property type="entry name" value="Multi_Drug_Res"/>
    <property type="match status" value="1"/>
</dbReference>
<dbReference type="SUPFAM" id="SSF103481">
    <property type="entry name" value="Multidrug resistance efflux transporter EmrE"/>
    <property type="match status" value="1"/>
</dbReference>
<keyword id="KW-0997">Cell inner membrane</keyword>
<keyword id="KW-1003">Cell membrane</keyword>
<keyword id="KW-0472">Membrane</keyword>
<keyword id="KW-0812">Transmembrane</keyword>
<keyword id="KW-1133">Transmembrane helix</keyword>
<keyword id="KW-0813">Transport</keyword>